<proteinExistence type="inferred from homology"/>
<protein>
    <recommendedName>
        <fullName>Transcription activator of gluconeogenesis</fullName>
    </recommendedName>
    <alternativeName>
        <fullName>Ethanol regulator of translation 1</fullName>
    </alternativeName>
</protein>
<evidence type="ECO:0000250" key="1"/>
<evidence type="ECO:0000255" key="2">
    <source>
        <dbReference type="PROSITE-ProRule" id="PRU00140"/>
    </source>
</evidence>
<evidence type="ECO:0000255" key="3">
    <source>
        <dbReference type="PROSITE-ProRule" id="PRU00227"/>
    </source>
</evidence>
<evidence type="ECO:0000256" key="4">
    <source>
        <dbReference type="SAM" id="MobiDB-lite"/>
    </source>
</evidence>
<evidence type="ECO:0000305" key="5"/>
<dbReference type="EMBL" id="CH408048">
    <property type="protein sequence ID" value="EDV11876.1"/>
    <property type="molecule type" value="Genomic_DNA"/>
</dbReference>
<dbReference type="SMR" id="B3LMS3"/>
<dbReference type="HOGENOM" id="CLU_010748_2_3_1"/>
<dbReference type="OrthoDB" id="17015at4893"/>
<dbReference type="Proteomes" id="UP000008335">
    <property type="component" value="Unassembled WGS sequence"/>
</dbReference>
<dbReference type="GO" id="GO:0005634">
    <property type="term" value="C:nucleus"/>
    <property type="evidence" value="ECO:0007669"/>
    <property type="project" value="UniProtKB-SubCell"/>
</dbReference>
<dbReference type="GO" id="GO:0000981">
    <property type="term" value="F:DNA-binding transcription factor activity, RNA polymerase II-specific"/>
    <property type="evidence" value="ECO:0007669"/>
    <property type="project" value="InterPro"/>
</dbReference>
<dbReference type="GO" id="GO:0000977">
    <property type="term" value="F:RNA polymerase II transcription regulatory region sequence-specific DNA binding"/>
    <property type="evidence" value="ECO:0007669"/>
    <property type="project" value="TreeGrafter"/>
</dbReference>
<dbReference type="GO" id="GO:0008270">
    <property type="term" value="F:zinc ion binding"/>
    <property type="evidence" value="ECO:0007669"/>
    <property type="project" value="InterPro"/>
</dbReference>
<dbReference type="GO" id="GO:0009267">
    <property type="term" value="P:cellular response to starvation"/>
    <property type="evidence" value="ECO:0007669"/>
    <property type="project" value="TreeGrafter"/>
</dbReference>
<dbReference type="GO" id="GO:0006094">
    <property type="term" value="P:gluconeogenesis"/>
    <property type="evidence" value="ECO:0007669"/>
    <property type="project" value="UniProtKB-KW"/>
</dbReference>
<dbReference type="CDD" id="cd00067">
    <property type="entry name" value="GAL4"/>
    <property type="match status" value="1"/>
</dbReference>
<dbReference type="CDD" id="cd00130">
    <property type="entry name" value="PAS"/>
    <property type="match status" value="1"/>
</dbReference>
<dbReference type="Gene3D" id="3.30.450.20">
    <property type="entry name" value="PAS domain"/>
    <property type="match status" value="1"/>
</dbReference>
<dbReference type="InterPro" id="IPR050335">
    <property type="entry name" value="ERT1_acuK_gluconeogen_tf"/>
</dbReference>
<dbReference type="InterPro" id="IPR000014">
    <property type="entry name" value="PAS"/>
</dbReference>
<dbReference type="InterPro" id="IPR035965">
    <property type="entry name" value="PAS-like_dom_sf"/>
</dbReference>
<dbReference type="InterPro" id="IPR056751">
    <property type="entry name" value="PAS_13"/>
</dbReference>
<dbReference type="InterPro" id="IPR036864">
    <property type="entry name" value="Zn2-C6_fun-type_DNA-bd_sf"/>
</dbReference>
<dbReference type="InterPro" id="IPR001138">
    <property type="entry name" value="Zn2Cys6_DnaBD"/>
</dbReference>
<dbReference type="NCBIfam" id="TIGR00229">
    <property type="entry name" value="sensory_box"/>
    <property type="match status" value="1"/>
</dbReference>
<dbReference type="PANTHER" id="PTHR47659:SF1">
    <property type="entry name" value="TRANSCRIPTION ACTIVATOR OF GLUCONEOGENESIS ERT1"/>
    <property type="match status" value="1"/>
</dbReference>
<dbReference type="PANTHER" id="PTHR47659">
    <property type="entry name" value="ZN(II)2CYS6 TRANSCRIPTION FACTOR (EUROFUNG)-RELATED"/>
    <property type="match status" value="1"/>
</dbReference>
<dbReference type="Pfam" id="PF24990">
    <property type="entry name" value="PAS_13"/>
    <property type="match status" value="1"/>
</dbReference>
<dbReference type="Pfam" id="PF00172">
    <property type="entry name" value="Zn_clus"/>
    <property type="match status" value="1"/>
</dbReference>
<dbReference type="SMART" id="SM00066">
    <property type="entry name" value="GAL4"/>
    <property type="match status" value="1"/>
</dbReference>
<dbReference type="SMART" id="SM00091">
    <property type="entry name" value="PAS"/>
    <property type="match status" value="1"/>
</dbReference>
<dbReference type="SUPFAM" id="SSF55785">
    <property type="entry name" value="PYP-like sensor domain (PAS domain)"/>
    <property type="match status" value="1"/>
</dbReference>
<dbReference type="SUPFAM" id="SSF57701">
    <property type="entry name" value="Zn2/Cys6 DNA-binding domain"/>
    <property type="match status" value="1"/>
</dbReference>
<dbReference type="PROSITE" id="PS50112">
    <property type="entry name" value="PAS"/>
    <property type="match status" value="1"/>
</dbReference>
<dbReference type="PROSITE" id="PS00463">
    <property type="entry name" value="ZN2_CY6_FUNGAL_1"/>
    <property type="match status" value="1"/>
</dbReference>
<dbReference type="PROSITE" id="PS50048">
    <property type="entry name" value="ZN2_CY6_FUNGAL_2"/>
    <property type="match status" value="1"/>
</dbReference>
<feature type="chain" id="PRO_0000406473" description="Transcription activator of gluconeogenesis">
    <location>
        <begin position="1"/>
        <end position="529"/>
    </location>
</feature>
<feature type="domain" description="PAS" evidence="2">
    <location>
        <begin position="408"/>
        <end position="480"/>
    </location>
</feature>
<feature type="DNA-binding region" description="Zn(2)-C6 fungal-type" evidence="3">
    <location>
        <begin position="40"/>
        <end position="68"/>
    </location>
</feature>
<feature type="region of interest" description="Disordered" evidence="4">
    <location>
        <begin position="1"/>
        <end position="31"/>
    </location>
</feature>
<feature type="compositionally biased region" description="Polar residues" evidence="4">
    <location>
        <begin position="14"/>
        <end position="23"/>
    </location>
</feature>
<name>ERT1_YEAS1</name>
<comment type="function">
    <text evidence="1">Transcription factor which regulates nonfermentable carbon utilization. Activator of gluconeogenetic genes (By similarity).</text>
</comment>
<comment type="subcellular location">
    <subcellularLocation>
        <location evidence="3">Nucleus</location>
    </subcellularLocation>
</comment>
<comment type="similarity">
    <text evidence="5">Belongs to the ERT1/acuK family.</text>
</comment>
<keyword id="KW-0010">Activator</keyword>
<keyword id="KW-0238">DNA-binding</keyword>
<keyword id="KW-0312">Gluconeogenesis</keyword>
<keyword id="KW-0479">Metal-binding</keyword>
<keyword id="KW-0539">Nucleus</keyword>
<keyword id="KW-0804">Transcription</keyword>
<keyword id="KW-0805">Transcription regulation</keyword>
<keyword id="KW-0862">Zinc</keyword>
<accession>B3LMS3</accession>
<reference key="1">
    <citation type="submission" date="2005-03" db="EMBL/GenBank/DDBJ databases">
        <title>Annotation of the Saccharomyces cerevisiae RM11-1a genome.</title>
        <authorList>
            <consortium name="The Broad Institute Genome Sequencing Platform"/>
            <person name="Birren B.W."/>
            <person name="Lander E.S."/>
            <person name="Galagan J.E."/>
            <person name="Nusbaum C."/>
            <person name="Devon K."/>
            <person name="Cuomo C."/>
            <person name="Jaffe D.B."/>
            <person name="Butler J."/>
            <person name="Alvarez P."/>
            <person name="Gnerre S."/>
            <person name="Grabherr M."/>
            <person name="Kleber M."/>
            <person name="Mauceli E.W."/>
            <person name="Brockman W."/>
            <person name="MacCallum I.A."/>
            <person name="Rounsley S."/>
            <person name="Young S.K."/>
            <person name="LaButti K."/>
            <person name="Pushparaj V."/>
            <person name="DeCaprio D."/>
            <person name="Crawford M."/>
            <person name="Koehrsen M."/>
            <person name="Engels R."/>
            <person name="Montgomery P."/>
            <person name="Pearson M."/>
            <person name="Howarth C."/>
            <person name="Larson L."/>
            <person name="Luoma S."/>
            <person name="White J."/>
            <person name="O'Leary S."/>
            <person name="Kodira C.D."/>
            <person name="Zeng Q."/>
            <person name="Yandava C."/>
            <person name="Alvarado L."/>
            <person name="Pratt S."/>
            <person name="Kruglyak L."/>
        </authorList>
    </citation>
    <scope>NUCLEOTIDE SEQUENCE [LARGE SCALE GENOMIC DNA]</scope>
    <source>
        <strain>RM11-1a</strain>
    </source>
</reference>
<sequence>MCTPDENDYKTSTDPDTSANTNHTLEKKKRKKRKNTNVACVNCSRLHVSCEAKRPCLRCISKGLTATCVDAPRKKSKYLAGIPNRELPMSIQPDLPPRKIMIPIYNNSSNSSLNVNNMGEQQKFTSPQHIVHKAKFLSNAADSEYSILSNIIYQDTLSNKIPIDILYSNTNSTSNSTIGNSSNNSPMVTNTSPEETEMEKIRQLYSEQRANMPPHPYPSSNQNVYSILLGPNSAKIVASQVNLFANHFPLVPVDSADNSLNFKRLLPRDPSEKSSQINWDSSINQYYLNSETVTFPELAIPLKRRKNHLVSVSLESCSPDAANIKSNVGWEHSLRYSTPMEIYTSINAPFSHTPGFHHLLVYLKHRFNQQDLVKMCRSIAEFRPIFIACSVTLTEEDMIFMEQCYQRTLLEYVKFIAQIGTPTCIWRRNGQISYVNEEFEILCGWTREELLNKMTFIVEIMDDESVRDYFKTLSKVAYRDFRGSEKMKVCRLLSPIKGKIIHCCCMWTLKRDVSGLPLMILGNFMPILN</sequence>
<organism>
    <name type="scientific">Saccharomyces cerevisiae (strain RM11-1a)</name>
    <name type="common">Baker's yeast</name>
    <dbReference type="NCBI Taxonomy" id="285006"/>
    <lineage>
        <taxon>Eukaryota</taxon>
        <taxon>Fungi</taxon>
        <taxon>Dikarya</taxon>
        <taxon>Ascomycota</taxon>
        <taxon>Saccharomycotina</taxon>
        <taxon>Saccharomycetes</taxon>
        <taxon>Saccharomycetales</taxon>
        <taxon>Saccharomycetaceae</taxon>
        <taxon>Saccharomyces</taxon>
    </lineage>
</organism>
<gene>
    <name type="primary">ERT1</name>
    <name type="ORF">SCRG_02731</name>
</gene>